<feature type="chain" id="PRO_0000343969" description="Cell division inhibitor SulA">
    <location>
        <begin position="1"/>
        <end position="161"/>
    </location>
</feature>
<feature type="region of interest" description="FtsZ binding">
    <location>
        <begin position="99"/>
        <end position="104"/>
    </location>
</feature>
<feature type="region of interest" description="FtsZ binding">
    <location>
        <begin position="106"/>
        <end position="108"/>
    </location>
</feature>
<feature type="region of interest" description="FtsZ binding">
    <location>
        <begin position="120"/>
        <end position="125"/>
    </location>
</feature>
<feature type="strand" evidence="4">
    <location>
        <begin position="45"/>
        <end position="53"/>
    </location>
</feature>
<feature type="helix" evidence="4">
    <location>
        <begin position="55"/>
        <end position="69"/>
    </location>
</feature>
<feature type="strand" evidence="4">
    <location>
        <begin position="73"/>
        <end position="82"/>
    </location>
</feature>
<feature type="helix" evidence="4">
    <location>
        <begin position="89"/>
        <end position="94"/>
    </location>
</feature>
<feature type="strand" evidence="4">
    <location>
        <begin position="101"/>
        <end position="105"/>
    </location>
</feature>
<feature type="helix" evidence="4">
    <location>
        <begin position="110"/>
        <end position="123"/>
    </location>
</feature>
<feature type="strand" evidence="4">
    <location>
        <begin position="126"/>
        <end position="131"/>
    </location>
</feature>
<feature type="helix" evidence="4">
    <location>
        <begin position="138"/>
        <end position="151"/>
    </location>
</feature>
<feature type="strand" evidence="4">
    <location>
        <begin position="154"/>
        <end position="159"/>
    </location>
</feature>
<name>SULA_PSEAE</name>
<keyword id="KW-0002">3D-structure</keyword>
<keyword id="KW-0131">Cell cycle</keyword>
<keyword id="KW-0132">Cell division</keyword>
<keyword id="KW-0227">DNA damage</keyword>
<keyword id="KW-1185">Reference proteome</keyword>
<keyword id="KW-0717">Septation</keyword>
<keyword id="KW-0742">SOS response</keyword>
<organism>
    <name type="scientific">Pseudomonas aeruginosa (strain ATCC 15692 / DSM 22644 / CIP 104116 / JCM 14847 / LMG 12228 / 1C / PRS 101 / PAO1)</name>
    <dbReference type="NCBI Taxonomy" id="208964"/>
    <lineage>
        <taxon>Bacteria</taxon>
        <taxon>Pseudomonadati</taxon>
        <taxon>Pseudomonadota</taxon>
        <taxon>Gammaproteobacteria</taxon>
        <taxon>Pseudomonadales</taxon>
        <taxon>Pseudomonadaceae</taxon>
        <taxon>Pseudomonas</taxon>
    </lineage>
</organism>
<comment type="function">
    <text evidence="1">Component of the SOS system and an inhibitor of cell division. Accumulation of SulA causes rapid cessation of cell division and the appearance of long, non-septate filaments. In the presence of GTP, binds a polymerization-competent form of FtsZ in a 1:1 ratio, thus inhibiting FtsZ polymerization and therefore preventing it from participating in the assembly of the Z ring. This mechanism prevents the premature segregation of damaged DNA to daughter cells during cell division (By similarity).</text>
</comment>
<comment type="subunit">
    <text evidence="2">Homodimer. Interacts with FtsZ.</text>
</comment>
<comment type="induction">
    <text evidence="1">By DNA damage, as part of the SOS response.</text>
</comment>
<comment type="PTM">
    <text evidence="1">Is rapidly cleaved and degraded by the Lon protease once DNA damage is repaired.</text>
</comment>
<comment type="similarity">
    <text evidence="3">Belongs to the SulA family.</text>
</comment>
<protein>
    <recommendedName>
        <fullName>Cell division inhibitor SulA</fullName>
    </recommendedName>
</protein>
<proteinExistence type="evidence at protein level"/>
<gene>
    <name type="primary">sulA</name>
    <name type="ordered locus">PA3008</name>
</gene>
<evidence type="ECO:0000250" key="1"/>
<evidence type="ECO:0000269" key="2">
    <source>
    </source>
</evidence>
<evidence type="ECO:0000305" key="3"/>
<evidence type="ECO:0007829" key="4">
    <source>
        <dbReference type="PDB" id="1OFU"/>
    </source>
</evidence>
<sequence>MQTSHSLPSAQLPLFQEAFWASNGAPLLDDVIDSPSSASIEEPAAFSELSLSGLPGHCLTLLAPILRELSEEQDARWLTLIAPPASLTHEWLRRAGLNRERILLLQAKDNAAALALSCEALRLGRSHTVVSWLEPLSRAARKQLSRAAQLGQAQSLNIRLG</sequence>
<reference key="1">
    <citation type="journal article" date="2000" name="Nature">
        <title>Complete genome sequence of Pseudomonas aeruginosa PAO1, an opportunistic pathogen.</title>
        <authorList>
            <person name="Stover C.K."/>
            <person name="Pham X.-Q.T."/>
            <person name="Erwin A.L."/>
            <person name="Mizoguchi S.D."/>
            <person name="Warrener P."/>
            <person name="Hickey M.J."/>
            <person name="Brinkman F.S.L."/>
            <person name="Hufnagle W.O."/>
            <person name="Kowalik D.J."/>
            <person name="Lagrou M."/>
            <person name="Garber R.L."/>
            <person name="Goltry L."/>
            <person name="Tolentino E."/>
            <person name="Westbrock-Wadman S."/>
            <person name="Yuan Y."/>
            <person name="Brody L.L."/>
            <person name="Coulter S.N."/>
            <person name="Folger K.R."/>
            <person name="Kas A."/>
            <person name="Larbig K."/>
            <person name="Lim R.M."/>
            <person name="Smith K.A."/>
            <person name="Spencer D.H."/>
            <person name="Wong G.K.-S."/>
            <person name="Wu Z."/>
            <person name="Paulsen I.T."/>
            <person name="Reizer J."/>
            <person name="Saier M.H. Jr."/>
            <person name="Hancock R.E.W."/>
            <person name="Lory S."/>
            <person name="Olson M.V."/>
        </authorList>
    </citation>
    <scope>NUCLEOTIDE SEQUENCE [LARGE SCALE GENOMIC DNA]</scope>
    <source>
        <strain>ATCC 15692 / DSM 22644 / CIP 104116 / JCM 14847 / LMG 12228 / 1C / PRS 101 / PAO1</strain>
    </source>
</reference>
<reference key="2">
    <citation type="journal article" date="2003" name="Proc. Natl. Acad. Sci. U.S.A.">
        <title>Crystal structure of the SOS cell division inhibitor SulA and in complex with FtsZ.</title>
        <authorList>
            <person name="Cordell S.C."/>
            <person name="Robinson E.J."/>
            <person name="Loewe J."/>
        </authorList>
    </citation>
    <scope>X-RAY CRYSTALLOGRAPHY (2.1 ANGSTROMS) UNCOMPLEXED AND IN COMPLEX WITH FTSZ</scope>
    <scope>SUBUNIT</scope>
    <source>
        <strain>ATCC 15692 / DSM 22644 / CIP 104116 / JCM 14847 / LMG 12228 / 1C / PRS 101 / PAO1</strain>
    </source>
</reference>
<dbReference type="EMBL" id="AE004091">
    <property type="protein sequence ID" value="AAG06396.1"/>
    <property type="molecule type" value="Genomic_DNA"/>
</dbReference>
<dbReference type="PIR" id="A83269">
    <property type="entry name" value="A83269"/>
</dbReference>
<dbReference type="RefSeq" id="NP_251698.1">
    <property type="nucleotide sequence ID" value="NC_002516.2"/>
</dbReference>
<dbReference type="RefSeq" id="WP_003091197.1">
    <property type="nucleotide sequence ID" value="NZ_QZGE01000009.1"/>
</dbReference>
<dbReference type="PDB" id="1OFT">
    <property type="method" value="X-ray"/>
    <property type="resolution" value="2.90 A"/>
    <property type="chains" value="A/B/C/D=1-161"/>
</dbReference>
<dbReference type="PDB" id="1OFU">
    <property type="method" value="X-ray"/>
    <property type="resolution" value="2.10 A"/>
    <property type="chains" value="X/Y=43-161"/>
</dbReference>
<dbReference type="PDBsum" id="1OFT"/>
<dbReference type="PDBsum" id="1OFU"/>
<dbReference type="SMR" id="Q9HZJ8"/>
<dbReference type="IntAct" id="Q9HZJ8">
    <property type="interactions" value="1"/>
</dbReference>
<dbReference type="STRING" id="208964.PA3008"/>
<dbReference type="PaxDb" id="208964-PA3008"/>
<dbReference type="DNASU" id="880164"/>
<dbReference type="GeneID" id="880164"/>
<dbReference type="KEGG" id="pae:PA3008"/>
<dbReference type="PATRIC" id="fig|208964.12.peg.3156"/>
<dbReference type="PseudoCAP" id="PA3008"/>
<dbReference type="HOGENOM" id="CLU_142237_0_0_6"/>
<dbReference type="InParanoid" id="Q9HZJ8"/>
<dbReference type="OrthoDB" id="7027674at2"/>
<dbReference type="PhylomeDB" id="Q9HZJ8"/>
<dbReference type="BioCyc" id="PAER208964:G1FZ6-3060-MONOMER"/>
<dbReference type="EvolutionaryTrace" id="Q9HZJ8"/>
<dbReference type="Proteomes" id="UP000002438">
    <property type="component" value="Chromosome"/>
</dbReference>
<dbReference type="GO" id="GO:0000917">
    <property type="term" value="P:division septum assembly"/>
    <property type="evidence" value="ECO:0007669"/>
    <property type="project" value="UniProtKB-KW"/>
</dbReference>
<dbReference type="GO" id="GO:0006281">
    <property type="term" value="P:DNA repair"/>
    <property type="evidence" value="ECO:0000318"/>
    <property type="project" value="GO_Central"/>
</dbReference>
<dbReference type="GO" id="GO:0051782">
    <property type="term" value="P:negative regulation of cell division"/>
    <property type="evidence" value="ECO:0007669"/>
    <property type="project" value="InterPro"/>
</dbReference>
<dbReference type="GO" id="GO:0009432">
    <property type="term" value="P:SOS response"/>
    <property type="evidence" value="ECO:0000269"/>
    <property type="project" value="CollecTF"/>
</dbReference>
<dbReference type="DisProt" id="DP01948"/>
<dbReference type="Gene3D" id="3.40.50.300">
    <property type="entry name" value="P-loop containing nucleotide triphosphate hydrolases"/>
    <property type="match status" value="1"/>
</dbReference>
<dbReference type="InterPro" id="IPR004596">
    <property type="entry name" value="Cell_div_suppressor_SulA"/>
</dbReference>
<dbReference type="InterPro" id="IPR027417">
    <property type="entry name" value="P-loop_NTPase"/>
</dbReference>
<dbReference type="InterPro" id="IPR050356">
    <property type="entry name" value="SulA_CellDiv_inhibitor"/>
</dbReference>
<dbReference type="NCBIfam" id="NF041583">
    <property type="entry name" value="SOS_SulA_aeru"/>
    <property type="match status" value="1"/>
</dbReference>
<dbReference type="PANTHER" id="PTHR35369">
    <property type="entry name" value="BLR3025 PROTEIN-RELATED"/>
    <property type="match status" value="1"/>
</dbReference>
<dbReference type="PANTHER" id="PTHR35369:SF4">
    <property type="entry name" value="CELL DIVISION INHIBITOR SULA"/>
    <property type="match status" value="1"/>
</dbReference>
<dbReference type="Pfam" id="PF03846">
    <property type="entry name" value="SulA"/>
    <property type="match status" value="1"/>
</dbReference>
<dbReference type="SUPFAM" id="SSF52540">
    <property type="entry name" value="P-loop containing nucleoside triphosphate hydrolases"/>
    <property type="match status" value="1"/>
</dbReference>
<accession>Q9HZJ8</accession>